<keyword id="KW-0963">Cytoplasm</keyword>
<keyword id="KW-0441">Lipid A biosynthesis</keyword>
<keyword id="KW-0444">Lipid biosynthesis</keyword>
<keyword id="KW-0443">Lipid metabolism</keyword>
<keyword id="KW-0456">Lyase</keyword>
<organism>
    <name type="scientific">Chlamydia trachomatis serovar L2b (strain UCH-1/proctitis)</name>
    <dbReference type="NCBI Taxonomy" id="471473"/>
    <lineage>
        <taxon>Bacteria</taxon>
        <taxon>Pseudomonadati</taxon>
        <taxon>Chlamydiota</taxon>
        <taxon>Chlamydiia</taxon>
        <taxon>Chlamydiales</taxon>
        <taxon>Chlamydiaceae</taxon>
        <taxon>Chlamydia/Chlamydophila group</taxon>
        <taxon>Chlamydia</taxon>
    </lineage>
</organism>
<reference key="1">
    <citation type="journal article" date="2008" name="Genome Res.">
        <title>Chlamydia trachomatis: genome sequence analysis of lymphogranuloma venereum isolates.</title>
        <authorList>
            <person name="Thomson N.R."/>
            <person name="Holden M.T.G."/>
            <person name="Carder C."/>
            <person name="Lennard N."/>
            <person name="Lockey S.J."/>
            <person name="Marsh P."/>
            <person name="Skipp P."/>
            <person name="O'Connor C.D."/>
            <person name="Goodhead I."/>
            <person name="Norbertzcak H."/>
            <person name="Harris B."/>
            <person name="Ormond D."/>
            <person name="Rance R."/>
            <person name="Quail M.A."/>
            <person name="Parkhill J."/>
            <person name="Stephens R.S."/>
            <person name="Clarke I.N."/>
        </authorList>
    </citation>
    <scope>NUCLEOTIDE SEQUENCE [LARGE SCALE GENOMIC DNA]</scope>
    <source>
        <strain>UCH-1/proctitis</strain>
    </source>
</reference>
<feature type="chain" id="PRO_1000197286" description="3-hydroxyacyl-[acyl-carrier-protein] dehydratase FabZ">
    <location>
        <begin position="1"/>
        <end position="153"/>
    </location>
</feature>
<feature type="active site" evidence="1">
    <location>
        <position position="54"/>
    </location>
</feature>
<sequence>MNEKPVLGIQDIQNLLPHRYPFLLVDKILSYDLNTRSVVAQKNVTINEPFFAGHFPGAPIMPGVLILEALAQAAGVLLGIILENDRDKKIALFLGIQKAKFRQPVKPGDVLTLKAEFSLISAKGGKAFAQAFVGSQVVAEGELSFVLVKKESI</sequence>
<evidence type="ECO:0000255" key="1">
    <source>
        <dbReference type="HAMAP-Rule" id="MF_00406"/>
    </source>
</evidence>
<dbReference type="EC" id="4.2.1.59" evidence="1"/>
<dbReference type="EMBL" id="AM884177">
    <property type="protein sequence ID" value="CAP07186.1"/>
    <property type="molecule type" value="Genomic_DNA"/>
</dbReference>
<dbReference type="RefSeq" id="WP_009871896.1">
    <property type="nucleotide sequence ID" value="NC_010280.2"/>
</dbReference>
<dbReference type="SMR" id="B0B9Y5"/>
<dbReference type="KEGG" id="ctl:CTLon_0789"/>
<dbReference type="HOGENOM" id="CLU_078912_3_3_0"/>
<dbReference type="Proteomes" id="UP001154401">
    <property type="component" value="Chromosome"/>
</dbReference>
<dbReference type="GO" id="GO:0005737">
    <property type="term" value="C:cytoplasm"/>
    <property type="evidence" value="ECO:0007669"/>
    <property type="project" value="UniProtKB-SubCell"/>
</dbReference>
<dbReference type="GO" id="GO:0016020">
    <property type="term" value="C:membrane"/>
    <property type="evidence" value="ECO:0007669"/>
    <property type="project" value="GOC"/>
</dbReference>
<dbReference type="GO" id="GO:0019171">
    <property type="term" value="F:(3R)-hydroxyacyl-[acyl-carrier-protein] dehydratase activity"/>
    <property type="evidence" value="ECO:0007669"/>
    <property type="project" value="UniProtKB-EC"/>
</dbReference>
<dbReference type="GO" id="GO:0006633">
    <property type="term" value="P:fatty acid biosynthetic process"/>
    <property type="evidence" value="ECO:0007669"/>
    <property type="project" value="UniProtKB-UniRule"/>
</dbReference>
<dbReference type="GO" id="GO:0009245">
    <property type="term" value="P:lipid A biosynthetic process"/>
    <property type="evidence" value="ECO:0007669"/>
    <property type="project" value="UniProtKB-UniRule"/>
</dbReference>
<dbReference type="CDD" id="cd01288">
    <property type="entry name" value="FabZ"/>
    <property type="match status" value="1"/>
</dbReference>
<dbReference type="FunFam" id="3.10.129.10:FF:000001">
    <property type="entry name" value="3-hydroxyacyl-[acyl-carrier-protein] dehydratase FabZ"/>
    <property type="match status" value="1"/>
</dbReference>
<dbReference type="Gene3D" id="3.10.129.10">
    <property type="entry name" value="Hotdog Thioesterase"/>
    <property type="match status" value="1"/>
</dbReference>
<dbReference type="HAMAP" id="MF_00406">
    <property type="entry name" value="FabZ"/>
    <property type="match status" value="1"/>
</dbReference>
<dbReference type="InterPro" id="IPR013114">
    <property type="entry name" value="FabA_FabZ"/>
</dbReference>
<dbReference type="InterPro" id="IPR010084">
    <property type="entry name" value="FabZ"/>
</dbReference>
<dbReference type="InterPro" id="IPR029069">
    <property type="entry name" value="HotDog_dom_sf"/>
</dbReference>
<dbReference type="NCBIfam" id="TIGR01750">
    <property type="entry name" value="fabZ"/>
    <property type="match status" value="1"/>
</dbReference>
<dbReference type="NCBIfam" id="NF000582">
    <property type="entry name" value="PRK00006.1"/>
    <property type="match status" value="1"/>
</dbReference>
<dbReference type="PANTHER" id="PTHR30272">
    <property type="entry name" value="3-HYDROXYACYL-[ACYL-CARRIER-PROTEIN] DEHYDRATASE"/>
    <property type="match status" value="1"/>
</dbReference>
<dbReference type="PANTHER" id="PTHR30272:SF1">
    <property type="entry name" value="3-HYDROXYACYL-[ACYL-CARRIER-PROTEIN] DEHYDRATASE"/>
    <property type="match status" value="1"/>
</dbReference>
<dbReference type="Pfam" id="PF07977">
    <property type="entry name" value="FabA"/>
    <property type="match status" value="1"/>
</dbReference>
<dbReference type="SUPFAM" id="SSF54637">
    <property type="entry name" value="Thioesterase/thiol ester dehydrase-isomerase"/>
    <property type="match status" value="1"/>
</dbReference>
<comment type="function">
    <text evidence="1">Involved in unsaturated fatty acids biosynthesis. Catalyzes the dehydration of short chain beta-hydroxyacyl-ACPs and long chain saturated and unsaturated beta-hydroxyacyl-ACPs.</text>
</comment>
<comment type="catalytic activity">
    <reaction evidence="1">
        <text>a (3R)-hydroxyacyl-[ACP] = a (2E)-enoyl-[ACP] + H2O</text>
        <dbReference type="Rhea" id="RHEA:13097"/>
        <dbReference type="Rhea" id="RHEA-COMP:9925"/>
        <dbReference type="Rhea" id="RHEA-COMP:9945"/>
        <dbReference type="ChEBI" id="CHEBI:15377"/>
        <dbReference type="ChEBI" id="CHEBI:78784"/>
        <dbReference type="ChEBI" id="CHEBI:78827"/>
        <dbReference type="EC" id="4.2.1.59"/>
    </reaction>
</comment>
<comment type="subcellular location">
    <subcellularLocation>
        <location evidence="1">Cytoplasm</location>
    </subcellularLocation>
</comment>
<comment type="similarity">
    <text evidence="1">Belongs to the thioester dehydratase family. FabZ subfamily.</text>
</comment>
<name>FABZ_CHLTB</name>
<proteinExistence type="inferred from homology"/>
<accession>B0B9Y5</accession>
<protein>
    <recommendedName>
        <fullName evidence="1">3-hydroxyacyl-[acyl-carrier-protein] dehydratase FabZ</fullName>
        <ecNumber evidence="1">4.2.1.59</ecNumber>
    </recommendedName>
    <alternativeName>
        <fullName evidence="1">(3R)-hydroxymyristoyl-[acyl-carrier-protein] dehydratase</fullName>
        <shortName evidence="1">(3R)-hydroxymyristoyl-ACP dehydrase</shortName>
    </alternativeName>
    <alternativeName>
        <fullName evidence="1">Beta-hydroxyacyl-ACP dehydratase</fullName>
    </alternativeName>
</protein>
<gene>
    <name evidence="1" type="primary">fabZ</name>
    <name type="ordered locus">CTLon_0789</name>
</gene>